<reference key="1">
    <citation type="journal article" date="2004" name="Proc. Natl. Acad. Sci. U.S.A.">
        <title>Complete genomes of two clinical Staphylococcus aureus strains: evidence for the rapid evolution of virulence and drug resistance.</title>
        <authorList>
            <person name="Holden M.T.G."/>
            <person name="Feil E.J."/>
            <person name="Lindsay J.A."/>
            <person name="Peacock S.J."/>
            <person name="Day N.P.J."/>
            <person name="Enright M.C."/>
            <person name="Foster T.J."/>
            <person name="Moore C.E."/>
            <person name="Hurst L."/>
            <person name="Atkin R."/>
            <person name="Barron A."/>
            <person name="Bason N."/>
            <person name="Bentley S.D."/>
            <person name="Chillingworth C."/>
            <person name="Chillingworth T."/>
            <person name="Churcher C."/>
            <person name="Clark L."/>
            <person name="Corton C."/>
            <person name="Cronin A."/>
            <person name="Doggett J."/>
            <person name="Dowd L."/>
            <person name="Feltwell T."/>
            <person name="Hance Z."/>
            <person name="Harris B."/>
            <person name="Hauser H."/>
            <person name="Holroyd S."/>
            <person name="Jagels K."/>
            <person name="James K.D."/>
            <person name="Lennard N."/>
            <person name="Line A."/>
            <person name="Mayes R."/>
            <person name="Moule S."/>
            <person name="Mungall K."/>
            <person name="Ormond D."/>
            <person name="Quail M.A."/>
            <person name="Rabbinowitsch E."/>
            <person name="Rutherford K.M."/>
            <person name="Sanders M."/>
            <person name="Sharp S."/>
            <person name="Simmonds M."/>
            <person name="Stevens K."/>
            <person name="Whitehead S."/>
            <person name="Barrell B.G."/>
            <person name="Spratt B.G."/>
            <person name="Parkhill J."/>
        </authorList>
    </citation>
    <scope>NUCLEOTIDE SEQUENCE [LARGE SCALE GENOMIC DNA]</scope>
    <source>
        <strain>MSSA476</strain>
    </source>
</reference>
<dbReference type="EMBL" id="BX571857">
    <property type="protein sequence ID" value="CAG43290.1"/>
    <property type="molecule type" value="Genomic_DNA"/>
</dbReference>
<dbReference type="SMR" id="Q6G915"/>
<dbReference type="KEGG" id="sas:SAS1489"/>
<dbReference type="HOGENOM" id="CLU_190949_0_2_9"/>
<dbReference type="GO" id="GO:0005737">
    <property type="term" value="C:cytoplasm"/>
    <property type="evidence" value="ECO:0007669"/>
    <property type="project" value="UniProtKB-ARBA"/>
</dbReference>
<dbReference type="GO" id="GO:1990904">
    <property type="term" value="C:ribonucleoprotein complex"/>
    <property type="evidence" value="ECO:0007669"/>
    <property type="project" value="UniProtKB-KW"/>
</dbReference>
<dbReference type="GO" id="GO:0005840">
    <property type="term" value="C:ribosome"/>
    <property type="evidence" value="ECO:0007669"/>
    <property type="project" value="UniProtKB-KW"/>
</dbReference>
<dbReference type="GO" id="GO:0003735">
    <property type="term" value="F:structural constituent of ribosome"/>
    <property type="evidence" value="ECO:0007669"/>
    <property type="project" value="InterPro"/>
</dbReference>
<dbReference type="GO" id="GO:0006412">
    <property type="term" value="P:translation"/>
    <property type="evidence" value="ECO:0007669"/>
    <property type="project" value="UniProtKB-UniRule"/>
</dbReference>
<dbReference type="Gene3D" id="2.20.28.120">
    <property type="entry name" value="Ribosomal protein L33"/>
    <property type="match status" value="1"/>
</dbReference>
<dbReference type="HAMAP" id="MF_00294">
    <property type="entry name" value="Ribosomal_bL33"/>
    <property type="match status" value="1"/>
</dbReference>
<dbReference type="InterPro" id="IPR001705">
    <property type="entry name" value="Ribosomal_bL33"/>
</dbReference>
<dbReference type="InterPro" id="IPR018264">
    <property type="entry name" value="Ribosomal_bL33_CS"/>
</dbReference>
<dbReference type="InterPro" id="IPR038584">
    <property type="entry name" value="Ribosomal_bL33_sf"/>
</dbReference>
<dbReference type="InterPro" id="IPR011332">
    <property type="entry name" value="Ribosomal_zn-bd"/>
</dbReference>
<dbReference type="NCBIfam" id="NF001764">
    <property type="entry name" value="PRK00504.1"/>
    <property type="match status" value="1"/>
</dbReference>
<dbReference type="NCBIfam" id="NF001860">
    <property type="entry name" value="PRK00595.1"/>
    <property type="match status" value="1"/>
</dbReference>
<dbReference type="NCBIfam" id="TIGR01023">
    <property type="entry name" value="rpmG_bact"/>
    <property type="match status" value="1"/>
</dbReference>
<dbReference type="PANTHER" id="PTHR43168">
    <property type="entry name" value="50S RIBOSOMAL PROTEIN L33, CHLOROPLASTIC"/>
    <property type="match status" value="1"/>
</dbReference>
<dbReference type="PANTHER" id="PTHR43168:SF2">
    <property type="entry name" value="LARGE RIBOSOMAL SUBUNIT PROTEIN BL33C"/>
    <property type="match status" value="1"/>
</dbReference>
<dbReference type="Pfam" id="PF00471">
    <property type="entry name" value="Ribosomal_L33"/>
    <property type="match status" value="1"/>
</dbReference>
<dbReference type="SUPFAM" id="SSF57829">
    <property type="entry name" value="Zn-binding ribosomal proteins"/>
    <property type="match status" value="1"/>
</dbReference>
<dbReference type="PROSITE" id="PS00582">
    <property type="entry name" value="RIBOSOMAL_L33"/>
    <property type="match status" value="1"/>
</dbReference>
<sequence>MRVNVTLACTECGDRNYITTKNKRNNPERVEMKKFCSRENKQTLHRETK</sequence>
<proteinExistence type="inferred from homology"/>
<accession>Q6G915</accession>
<name>RL331_STAAS</name>
<evidence type="ECO:0000255" key="1">
    <source>
        <dbReference type="HAMAP-Rule" id="MF_00294"/>
    </source>
</evidence>
<keyword id="KW-0687">Ribonucleoprotein</keyword>
<keyword id="KW-0689">Ribosomal protein</keyword>
<gene>
    <name evidence="1" type="primary">rpmG1</name>
    <name type="ordered locus">SAS1489</name>
</gene>
<feature type="chain" id="PRO_0000170222" description="Large ribosomal subunit protein bL33A">
    <location>
        <begin position="1"/>
        <end position="49"/>
    </location>
</feature>
<comment type="similarity">
    <text evidence="1">Belongs to the bacterial ribosomal protein bL33 family.</text>
</comment>
<protein>
    <recommendedName>
        <fullName evidence="1">Large ribosomal subunit protein bL33A</fullName>
    </recommendedName>
    <alternativeName>
        <fullName evidence="1">50S ribosomal protein L33 1</fullName>
    </alternativeName>
</protein>
<organism>
    <name type="scientific">Staphylococcus aureus (strain MSSA476)</name>
    <dbReference type="NCBI Taxonomy" id="282459"/>
    <lineage>
        <taxon>Bacteria</taxon>
        <taxon>Bacillati</taxon>
        <taxon>Bacillota</taxon>
        <taxon>Bacilli</taxon>
        <taxon>Bacillales</taxon>
        <taxon>Staphylococcaceae</taxon>
        <taxon>Staphylococcus</taxon>
    </lineage>
</organism>